<proteinExistence type="inferred from homology"/>
<name>CLPB_MYCTO</name>
<evidence type="ECO:0000250" key="1"/>
<evidence type="ECO:0000255" key="2">
    <source>
        <dbReference type="PROSITE-ProRule" id="PRU01251"/>
    </source>
</evidence>
<evidence type="ECO:0000305" key="3"/>
<accession>P9WPD0</accession>
<accession>L0T577</accession>
<accession>O53719</accession>
<accession>P63288</accession>
<protein>
    <recommendedName>
        <fullName>Chaperone protein ClpB</fullName>
    </recommendedName>
</protein>
<sequence length="848" mass="92568">MDSFNPTTKTQAALTAALQAASTAGNPEIRPAHLLMALLTQNDGIAAPLLEAVGVEPATVRAETQRLLDRLPQATGASTQPQLSRESLAAITTAQQLATELDDEYVSTEHVMVGLATGDSDVAKLLTGHGASPQALREAFVKVRGSARVTSPEPEATYQALQKYSTDLTARAREGKLDPVIGRDNEIRRVVQVLSRRTKNNPVLIGEPGVGKTAIVEGLAQRIVAGDVPESLRDKTIVALDLGSMVAGSKYRGEFEERLKAVLDDIKNSAGQIITFIDELHTIVGAGATGEGAMDAGNMIKPMLARGELRLVGATTLDEYRKHIEKDAALERRFQQVYVGEPSVEDTIGILRGLKDRYEVHHGVRITDSALVAAATLSDRYITARFLPDKAIDLVDEAASRLRMEIDSRPVEIDEVERLVRRLEIEEMALSKEEDEASAERLAKLRSELADQKEKLAELTTRWQNEKNAIEIVRDLKEQLEALRGESERAERDGDLAKAAELRYGRIPEVEKKLDAALPQAQAREQVMLKEEVGPDDIADVVSAWTGIPAGRLLEGETAKLLRMEDELGKRVIGQKAAVTAVSDAVRRSRAGVSDPNRPTGAFMFLGPTGVGKTELAKALADFLFDDERAMVRIDMSEYGEKHTVARLIGAPPGYVGYEAGGQLTEAVRRRPYTVVLFDEIEKAHPDVFDVLLQVLDEGRLTDGHGRTVDFRNTILILTSNLGSGGSAEQVLAAVRATFKPEFINRLDDVLIFEGLNPEELVRIVDIQLAQLGKRLAQRRLQLQVSLPAKRWLAQRGFDPVYGARPLRRLVQQAIGDQLAKMLLAGQVHDGDTVPVNVSPDADSLILG</sequence>
<reference key="1">
    <citation type="journal article" date="2002" name="J. Bacteriol.">
        <title>Whole-genome comparison of Mycobacterium tuberculosis clinical and laboratory strains.</title>
        <authorList>
            <person name="Fleischmann R.D."/>
            <person name="Alland D."/>
            <person name="Eisen J.A."/>
            <person name="Carpenter L."/>
            <person name="White O."/>
            <person name="Peterson J.D."/>
            <person name="DeBoy R.T."/>
            <person name="Dodson R.J."/>
            <person name="Gwinn M.L."/>
            <person name="Haft D.H."/>
            <person name="Hickey E.K."/>
            <person name="Kolonay J.F."/>
            <person name="Nelson W.C."/>
            <person name="Umayam L.A."/>
            <person name="Ermolaeva M.D."/>
            <person name="Salzberg S.L."/>
            <person name="Delcher A."/>
            <person name="Utterback T.R."/>
            <person name="Weidman J.F."/>
            <person name="Khouri H.M."/>
            <person name="Gill J."/>
            <person name="Mikula A."/>
            <person name="Bishai W."/>
            <person name="Jacobs W.R. Jr."/>
            <person name="Venter J.C."/>
            <person name="Fraser C.M."/>
        </authorList>
    </citation>
    <scope>NUCLEOTIDE SEQUENCE [LARGE SCALE GENOMIC DNA]</scope>
    <source>
        <strain>CDC 1551 / Oshkosh</strain>
    </source>
</reference>
<dbReference type="EMBL" id="AE000516">
    <property type="protein sequence ID" value="AAK44619.1"/>
    <property type="molecule type" value="Genomic_DNA"/>
</dbReference>
<dbReference type="PIR" id="C70834">
    <property type="entry name" value="C70834"/>
</dbReference>
<dbReference type="RefSeq" id="WP_003401905.1">
    <property type="nucleotide sequence ID" value="NZ_KK341227.1"/>
</dbReference>
<dbReference type="EMDB" id="EMD-21553"/>
<dbReference type="EMDB" id="EMD-21554"/>
<dbReference type="EMDB" id="EMD-21555"/>
<dbReference type="EMDB" id="EMD-21556"/>
<dbReference type="EMDB" id="EMD-21557"/>
<dbReference type="EMDB" id="EMD-23206"/>
<dbReference type="EMDB" id="EMD-9028"/>
<dbReference type="SMR" id="P9WPD0"/>
<dbReference type="KEGG" id="mtc:MT0397"/>
<dbReference type="PATRIC" id="fig|83331.31.peg.423"/>
<dbReference type="HOGENOM" id="CLU_005070_4_2_11"/>
<dbReference type="Proteomes" id="UP000001020">
    <property type="component" value="Chromosome"/>
</dbReference>
<dbReference type="GO" id="GO:0005737">
    <property type="term" value="C:cytoplasm"/>
    <property type="evidence" value="ECO:0007669"/>
    <property type="project" value="UniProtKB-SubCell"/>
</dbReference>
<dbReference type="GO" id="GO:0005524">
    <property type="term" value="F:ATP binding"/>
    <property type="evidence" value="ECO:0007669"/>
    <property type="project" value="UniProtKB-KW"/>
</dbReference>
<dbReference type="GO" id="GO:0016887">
    <property type="term" value="F:ATP hydrolysis activity"/>
    <property type="evidence" value="ECO:0007669"/>
    <property type="project" value="InterPro"/>
</dbReference>
<dbReference type="GO" id="GO:0034605">
    <property type="term" value="P:cellular response to heat"/>
    <property type="evidence" value="ECO:0007669"/>
    <property type="project" value="TreeGrafter"/>
</dbReference>
<dbReference type="GO" id="GO:0042026">
    <property type="term" value="P:protein refolding"/>
    <property type="evidence" value="ECO:0007669"/>
    <property type="project" value="InterPro"/>
</dbReference>
<dbReference type="CDD" id="cd00009">
    <property type="entry name" value="AAA"/>
    <property type="match status" value="1"/>
</dbReference>
<dbReference type="CDD" id="cd19499">
    <property type="entry name" value="RecA-like_ClpB_Hsp104-like"/>
    <property type="match status" value="1"/>
</dbReference>
<dbReference type="FunFam" id="1.10.8.60:FF:000017">
    <property type="entry name" value="ATP-dependent chaperone ClpB"/>
    <property type="match status" value="1"/>
</dbReference>
<dbReference type="FunFam" id="3.40.50.300:FF:000120">
    <property type="entry name" value="ATP-dependent chaperone ClpB"/>
    <property type="match status" value="1"/>
</dbReference>
<dbReference type="FunFam" id="3.40.50.300:FF:000025">
    <property type="entry name" value="ATP-dependent Clp protease subunit"/>
    <property type="match status" value="1"/>
</dbReference>
<dbReference type="FunFam" id="3.40.50.300:FF:000010">
    <property type="entry name" value="Chaperone clpB 1, putative"/>
    <property type="match status" value="1"/>
</dbReference>
<dbReference type="FunFam" id="1.10.1780.10:FF:000007">
    <property type="entry name" value="Chaperone protein ClpB"/>
    <property type="match status" value="1"/>
</dbReference>
<dbReference type="Gene3D" id="1.10.8.60">
    <property type="match status" value="1"/>
</dbReference>
<dbReference type="Gene3D" id="1.10.1780.10">
    <property type="entry name" value="Clp, N-terminal domain"/>
    <property type="match status" value="1"/>
</dbReference>
<dbReference type="Gene3D" id="3.40.50.300">
    <property type="entry name" value="P-loop containing nucleotide triphosphate hydrolases"/>
    <property type="match status" value="3"/>
</dbReference>
<dbReference type="InterPro" id="IPR003593">
    <property type="entry name" value="AAA+_ATPase"/>
</dbReference>
<dbReference type="InterPro" id="IPR003959">
    <property type="entry name" value="ATPase_AAA_core"/>
</dbReference>
<dbReference type="InterPro" id="IPR017730">
    <property type="entry name" value="Chaperonin_ClpB"/>
</dbReference>
<dbReference type="InterPro" id="IPR019489">
    <property type="entry name" value="Clp_ATPase_C"/>
</dbReference>
<dbReference type="InterPro" id="IPR036628">
    <property type="entry name" value="Clp_N_dom_sf"/>
</dbReference>
<dbReference type="InterPro" id="IPR004176">
    <property type="entry name" value="Clp_R_dom"/>
</dbReference>
<dbReference type="InterPro" id="IPR001270">
    <property type="entry name" value="ClpA/B"/>
</dbReference>
<dbReference type="InterPro" id="IPR018368">
    <property type="entry name" value="ClpA/B_CS1"/>
</dbReference>
<dbReference type="InterPro" id="IPR028299">
    <property type="entry name" value="ClpA/B_CS2"/>
</dbReference>
<dbReference type="InterPro" id="IPR041546">
    <property type="entry name" value="ClpA/ClpB_AAA_lid"/>
</dbReference>
<dbReference type="InterPro" id="IPR050130">
    <property type="entry name" value="ClpA_ClpB"/>
</dbReference>
<dbReference type="InterPro" id="IPR027417">
    <property type="entry name" value="P-loop_NTPase"/>
</dbReference>
<dbReference type="NCBIfam" id="TIGR03346">
    <property type="entry name" value="chaperone_ClpB"/>
    <property type="match status" value="1"/>
</dbReference>
<dbReference type="PANTHER" id="PTHR11638">
    <property type="entry name" value="ATP-DEPENDENT CLP PROTEASE"/>
    <property type="match status" value="1"/>
</dbReference>
<dbReference type="PANTHER" id="PTHR11638:SF18">
    <property type="entry name" value="HEAT SHOCK PROTEIN 104"/>
    <property type="match status" value="1"/>
</dbReference>
<dbReference type="Pfam" id="PF00004">
    <property type="entry name" value="AAA"/>
    <property type="match status" value="1"/>
</dbReference>
<dbReference type="Pfam" id="PF07724">
    <property type="entry name" value="AAA_2"/>
    <property type="match status" value="1"/>
</dbReference>
<dbReference type="Pfam" id="PF17871">
    <property type="entry name" value="AAA_lid_9"/>
    <property type="match status" value="1"/>
</dbReference>
<dbReference type="Pfam" id="PF02861">
    <property type="entry name" value="Clp_N"/>
    <property type="match status" value="2"/>
</dbReference>
<dbReference type="Pfam" id="PF10431">
    <property type="entry name" value="ClpB_D2-small"/>
    <property type="match status" value="1"/>
</dbReference>
<dbReference type="PRINTS" id="PR00300">
    <property type="entry name" value="CLPPROTEASEA"/>
</dbReference>
<dbReference type="SMART" id="SM00382">
    <property type="entry name" value="AAA"/>
    <property type="match status" value="2"/>
</dbReference>
<dbReference type="SMART" id="SM01086">
    <property type="entry name" value="ClpB_D2-small"/>
    <property type="match status" value="1"/>
</dbReference>
<dbReference type="SUPFAM" id="SSF81923">
    <property type="entry name" value="Double Clp-N motif"/>
    <property type="match status" value="1"/>
</dbReference>
<dbReference type="SUPFAM" id="SSF52540">
    <property type="entry name" value="P-loop containing nucleoside triphosphate hydrolases"/>
    <property type="match status" value="2"/>
</dbReference>
<dbReference type="PROSITE" id="PS51903">
    <property type="entry name" value="CLP_R"/>
    <property type="match status" value="1"/>
</dbReference>
<dbReference type="PROSITE" id="PS00870">
    <property type="entry name" value="CLPAB_1"/>
    <property type="match status" value="1"/>
</dbReference>
<dbReference type="PROSITE" id="PS00871">
    <property type="entry name" value="CLPAB_2"/>
    <property type="match status" value="1"/>
</dbReference>
<gene>
    <name type="primary">clpB</name>
    <name type="ordered locus">MT0397</name>
</gene>
<comment type="function">
    <text evidence="1">Part of a stress-induced multi-chaperone system, it is involved in the recovery of the cell from heat-induced damage, in cooperation with DnaK, DnaJ and GrpE. Acts before DnaK, in the processing of protein aggregates. Protein binding stimulates the ATPase activity; ATP hydrolysis unfolds the denatured protein aggregates, which probably helps expose new hydrophobic binding sites on the surface of ClpB-bound aggregates, contributing to the solubilization and refolding of denatured protein aggregates by DnaK (By similarity).</text>
</comment>
<comment type="subunit">
    <text evidence="1">Homohexamer. The oligomerization is ATP-dependent (By similarity).</text>
</comment>
<comment type="subcellular location">
    <subcellularLocation>
        <location evidence="3">Cytoplasm</location>
    </subcellularLocation>
</comment>
<comment type="domain">
    <text evidence="1">The Clp repeat (R) domain probably functions as a substrate-discriminating domain, recruiting aggregated proteins to the ClpB hexamer and/or stabilizing bound proteins. The NBD2 domain is responsible for oligomerization, whereas the NBD1 domain stabilizes the hexamer probably in an ATP-dependent manner. The movement of the coiled-coil domain is essential for ClpB ability to rescue proteins from an aggregated state, probably by pulling apart large aggregated proteins, which are bound between the coiled-coils motifs of adjacent ClpB subunits in the functional hexamer (By similarity).</text>
</comment>
<comment type="similarity">
    <text evidence="3">Belongs to the ClpA/ClpB family.</text>
</comment>
<keyword id="KW-0067">ATP-binding</keyword>
<keyword id="KW-0143">Chaperone</keyword>
<keyword id="KW-0175">Coiled coil</keyword>
<keyword id="KW-0963">Cytoplasm</keyword>
<keyword id="KW-0547">Nucleotide-binding</keyword>
<keyword id="KW-1185">Reference proteome</keyword>
<keyword id="KW-0677">Repeat</keyword>
<keyword id="KW-0346">Stress response</keyword>
<feature type="chain" id="PRO_0000426973" description="Chaperone protein ClpB">
    <location>
        <begin position="1"/>
        <end position="848"/>
    </location>
</feature>
<feature type="domain" description="Clp R" evidence="2">
    <location>
        <begin position="1"/>
        <end position="146"/>
    </location>
</feature>
<feature type="region of interest" description="Repeat 1" evidence="2">
    <location>
        <begin position="6"/>
        <end position="71"/>
    </location>
</feature>
<feature type="region of interest" description="Repeat 2" evidence="2">
    <location>
        <begin position="83"/>
        <end position="146"/>
    </location>
</feature>
<feature type="region of interest" description="NBD1" evidence="1">
    <location>
        <begin position="159"/>
        <end position="341"/>
    </location>
</feature>
<feature type="region of interest" description="Linker" evidence="1">
    <location>
        <begin position="342"/>
        <end position="547"/>
    </location>
</feature>
<feature type="region of interest" description="NBD2" evidence="1">
    <location>
        <begin position="557"/>
        <end position="755"/>
    </location>
</feature>
<feature type="region of interest" description="C-terminal" evidence="1">
    <location>
        <begin position="756"/>
        <end position="848"/>
    </location>
</feature>
<feature type="coiled-coil region" evidence="1">
    <location>
        <begin position="392"/>
        <end position="524"/>
    </location>
</feature>
<feature type="binding site" evidence="1">
    <location>
        <begin position="206"/>
        <end position="213"/>
    </location>
    <ligand>
        <name>ATP</name>
        <dbReference type="ChEBI" id="CHEBI:30616"/>
        <label>1</label>
    </ligand>
</feature>
<feature type="binding site" evidence="1">
    <location>
        <begin position="607"/>
        <end position="614"/>
    </location>
    <ligand>
        <name>ATP</name>
        <dbReference type="ChEBI" id="CHEBI:30616"/>
        <label>2</label>
    </ligand>
</feature>
<organism>
    <name type="scientific">Mycobacterium tuberculosis (strain CDC 1551 / Oshkosh)</name>
    <dbReference type="NCBI Taxonomy" id="83331"/>
    <lineage>
        <taxon>Bacteria</taxon>
        <taxon>Bacillati</taxon>
        <taxon>Actinomycetota</taxon>
        <taxon>Actinomycetes</taxon>
        <taxon>Mycobacteriales</taxon>
        <taxon>Mycobacteriaceae</taxon>
        <taxon>Mycobacterium</taxon>
        <taxon>Mycobacterium tuberculosis complex</taxon>
    </lineage>
</organism>